<gene>
    <name evidence="1" type="primary">cheB</name>
    <name type="ordered locus">Moth_0743</name>
</gene>
<evidence type="ECO:0000255" key="1">
    <source>
        <dbReference type="HAMAP-Rule" id="MF_00099"/>
    </source>
</evidence>
<evidence type="ECO:0000256" key="2">
    <source>
        <dbReference type="SAM" id="MobiDB-lite"/>
    </source>
</evidence>
<name>CHEB_MOOTA</name>
<sequence length="424" mass="43300">MNWPVRVLVVDDSAFSRRLVTDILQADPDIQVVGYARNGREALEKVASLQPRVVTLDQEMPVMDGLTTLTALMAGNPVAVIMLSSHTAAGAAVTIKALELGAVDFIPKPAPGDSLDDFTRQLTEKVKAAARVPVTRLCRGKNCRENTPAPFISPRPGREEAVAAVTGSAAATAAIGSRLSPGRSPGGKEGVAGAVSAGSTRGEAIRPGKGTPAAIKGAVAAGAGRLPGRRPGIEVVAIGTSTGGPAALRQVLTALPGNLPAGIVIVQHMPAGFTGPLARRLDELAALEVREAAAGDILRPGLALLAPAGRQMLLERHGDAVQVHLAAEAGITTLFKPSVDALFLTVAREYGPRSLGVILTGMGNDGLRGLRAIKEQGGTVIAQDEATSVVYGMPRAAVEAGLADLVLPLEDIAPAIVALVTGAG</sequence>
<keyword id="KW-0145">Chemotaxis</keyword>
<keyword id="KW-0963">Cytoplasm</keyword>
<keyword id="KW-0378">Hydrolase</keyword>
<keyword id="KW-0597">Phosphoprotein</keyword>
<dbReference type="EC" id="3.1.1.61" evidence="1"/>
<dbReference type="EC" id="3.5.1.44" evidence="1"/>
<dbReference type="EMBL" id="CP000232">
    <property type="protein sequence ID" value="ABC19061.1"/>
    <property type="molecule type" value="Genomic_DNA"/>
</dbReference>
<dbReference type="RefSeq" id="YP_429604.1">
    <property type="nucleotide sequence ID" value="NC_007644.1"/>
</dbReference>
<dbReference type="SMR" id="Q2RKH8"/>
<dbReference type="STRING" id="264732.Moth_0743"/>
<dbReference type="EnsemblBacteria" id="ABC19061">
    <property type="protein sequence ID" value="ABC19061"/>
    <property type="gene ID" value="Moth_0743"/>
</dbReference>
<dbReference type="KEGG" id="mta:Moth_0743"/>
<dbReference type="PATRIC" id="fig|264732.11.peg.798"/>
<dbReference type="eggNOG" id="COG2201">
    <property type="taxonomic scope" value="Bacteria"/>
</dbReference>
<dbReference type="HOGENOM" id="CLU_000445_51_0_9"/>
<dbReference type="OrthoDB" id="9793421at2"/>
<dbReference type="GO" id="GO:0005737">
    <property type="term" value="C:cytoplasm"/>
    <property type="evidence" value="ECO:0007669"/>
    <property type="project" value="UniProtKB-SubCell"/>
</dbReference>
<dbReference type="GO" id="GO:0000156">
    <property type="term" value="F:phosphorelay response regulator activity"/>
    <property type="evidence" value="ECO:0007669"/>
    <property type="project" value="InterPro"/>
</dbReference>
<dbReference type="GO" id="GO:0008984">
    <property type="term" value="F:protein-glutamate methylesterase activity"/>
    <property type="evidence" value="ECO:0007669"/>
    <property type="project" value="UniProtKB-UniRule"/>
</dbReference>
<dbReference type="GO" id="GO:0050568">
    <property type="term" value="F:protein-glutamine glutaminase activity"/>
    <property type="evidence" value="ECO:0007669"/>
    <property type="project" value="UniProtKB-UniRule"/>
</dbReference>
<dbReference type="GO" id="GO:0006935">
    <property type="term" value="P:chemotaxis"/>
    <property type="evidence" value="ECO:0007669"/>
    <property type="project" value="UniProtKB-UniRule"/>
</dbReference>
<dbReference type="CDD" id="cd16432">
    <property type="entry name" value="CheB_Rec"/>
    <property type="match status" value="1"/>
</dbReference>
<dbReference type="CDD" id="cd17541">
    <property type="entry name" value="REC_CheB-like"/>
    <property type="match status" value="1"/>
</dbReference>
<dbReference type="Gene3D" id="3.40.50.2300">
    <property type="match status" value="1"/>
</dbReference>
<dbReference type="Gene3D" id="3.40.50.180">
    <property type="entry name" value="Methylesterase CheB, C-terminal domain"/>
    <property type="match status" value="1"/>
</dbReference>
<dbReference type="HAMAP" id="MF_00099">
    <property type="entry name" value="CheB_chemtxs"/>
    <property type="match status" value="1"/>
</dbReference>
<dbReference type="InterPro" id="IPR008248">
    <property type="entry name" value="CheB-like"/>
</dbReference>
<dbReference type="InterPro" id="IPR035909">
    <property type="entry name" value="CheB_C"/>
</dbReference>
<dbReference type="InterPro" id="IPR011006">
    <property type="entry name" value="CheY-like_superfamily"/>
</dbReference>
<dbReference type="InterPro" id="IPR000673">
    <property type="entry name" value="Sig_transdc_resp-reg_Me-estase"/>
</dbReference>
<dbReference type="InterPro" id="IPR001789">
    <property type="entry name" value="Sig_transdc_resp-reg_receiver"/>
</dbReference>
<dbReference type="NCBIfam" id="NF001965">
    <property type="entry name" value="PRK00742.1"/>
    <property type="match status" value="1"/>
</dbReference>
<dbReference type="PANTHER" id="PTHR42872">
    <property type="entry name" value="PROTEIN-GLUTAMATE METHYLESTERASE/PROTEIN-GLUTAMINE GLUTAMINASE"/>
    <property type="match status" value="1"/>
</dbReference>
<dbReference type="PANTHER" id="PTHR42872:SF3">
    <property type="entry name" value="PROTEIN-GLUTAMATE METHYLESTERASE_PROTEIN-GLUTAMINE GLUTAMINASE 1"/>
    <property type="match status" value="1"/>
</dbReference>
<dbReference type="Pfam" id="PF01339">
    <property type="entry name" value="CheB_methylest"/>
    <property type="match status" value="1"/>
</dbReference>
<dbReference type="Pfam" id="PF00072">
    <property type="entry name" value="Response_reg"/>
    <property type="match status" value="1"/>
</dbReference>
<dbReference type="SMART" id="SM00448">
    <property type="entry name" value="REC"/>
    <property type="match status" value="1"/>
</dbReference>
<dbReference type="SUPFAM" id="SSF52172">
    <property type="entry name" value="CheY-like"/>
    <property type="match status" value="1"/>
</dbReference>
<dbReference type="SUPFAM" id="SSF52738">
    <property type="entry name" value="Methylesterase CheB, C-terminal domain"/>
    <property type="match status" value="1"/>
</dbReference>
<dbReference type="PROSITE" id="PS50122">
    <property type="entry name" value="CHEB"/>
    <property type="match status" value="1"/>
</dbReference>
<dbReference type="PROSITE" id="PS50110">
    <property type="entry name" value="RESPONSE_REGULATORY"/>
    <property type="match status" value="1"/>
</dbReference>
<accession>Q2RKH8</accession>
<reference key="1">
    <citation type="journal article" date="2008" name="Environ. Microbiol.">
        <title>The complete genome sequence of Moorella thermoacetica (f. Clostridium thermoaceticum).</title>
        <authorList>
            <person name="Pierce E."/>
            <person name="Xie G."/>
            <person name="Barabote R.D."/>
            <person name="Saunders E."/>
            <person name="Han C.S."/>
            <person name="Detter J.C."/>
            <person name="Richardson P."/>
            <person name="Brettin T.S."/>
            <person name="Das A."/>
            <person name="Ljungdahl L.G."/>
            <person name="Ragsdale S.W."/>
        </authorList>
    </citation>
    <scope>NUCLEOTIDE SEQUENCE [LARGE SCALE GENOMIC DNA]</scope>
    <source>
        <strain>ATCC 39073 / JCM 9320</strain>
    </source>
</reference>
<protein>
    <recommendedName>
        <fullName evidence="1">Protein-glutamate methylesterase/protein-glutamine glutaminase</fullName>
        <ecNumber evidence="1">3.1.1.61</ecNumber>
        <ecNumber evidence="1">3.5.1.44</ecNumber>
    </recommendedName>
</protein>
<proteinExistence type="inferred from homology"/>
<organism>
    <name type="scientific">Moorella thermoacetica (strain ATCC 39073 / JCM 9320)</name>
    <dbReference type="NCBI Taxonomy" id="264732"/>
    <lineage>
        <taxon>Bacteria</taxon>
        <taxon>Bacillati</taxon>
        <taxon>Bacillota</taxon>
        <taxon>Clostridia</taxon>
        <taxon>Moorellales</taxon>
        <taxon>Moorellaceae</taxon>
        <taxon>Moorella</taxon>
    </lineage>
</organism>
<comment type="function">
    <text evidence="1">Involved in chemotaxis. Part of a chemotaxis signal transduction system that modulates chemotaxis in response to various stimuli. Catalyzes the demethylation of specific methylglutamate residues introduced into the chemoreceptors (methyl-accepting chemotaxis proteins or MCP) by CheR. Also mediates the irreversible deamidation of specific glutamine residues to glutamic acid.</text>
</comment>
<comment type="catalytic activity">
    <reaction evidence="1">
        <text>[protein]-L-glutamate 5-O-methyl ester + H2O = L-glutamyl-[protein] + methanol + H(+)</text>
        <dbReference type="Rhea" id="RHEA:23236"/>
        <dbReference type="Rhea" id="RHEA-COMP:10208"/>
        <dbReference type="Rhea" id="RHEA-COMP:10311"/>
        <dbReference type="ChEBI" id="CHEBI:15377"/>
        <dbReference type="ChEBI" id="CHEBI:15378"/>
        <dbReference type="ChEBI" id="CHEBI:17790"/>
        <dbReference type="ChEBI" id="CHEBI:29973"/>
        <dbReference type="ChEBI" id="CHEBI:82795"/>
        <dbReference type="EC" id="3.1.1.61"/>
    </reaction>
</comment>
<comment type="catalytic activity">
    <reaction evidence="1">
        <text>L-glutaminyl-[protein] + H2O = L-glutamyl-[protein] + NH4(+)</text>
        <dbReference type="Rhea" id="RHEA:16441"/>
        <dbReference type="Rhea" id="RHEA-COMP:10207"/>
        <dbReference type="Rhea" id="RHEA-COMP:10208"/>
        <dbReference type="ChEBI" id="CHEBI:15377"/>
        <dbReference type="ChEBI" id="CHEBI:28938"/>
        <dbReference type="ChEBI" id="CHEBI:29973"/>
        <dbReference type="ChEBI" id="CHEBI:30011"/>
        <dbReference type="EC" id="3.5.1.44"/>
    </reaction>
</comment>
<comment type="subcellular location">
    <subcellularLocation>
        <location evidence="1">Cytoplasm</location>
    </subcellularLocation>
</comment>
<comment type="domain">
    <text evidence="1">Contains a C-terminal catalytic domain, and an N-terminal region which modulates catalytic activity.</text>
</comment>
<comment type="PTM">
    <text evidence="1">Phosphorylated by CheA. Phosphorylation of the N-terminal regulatory domain activates the methylesterase activity.</text>
</comment>
<comment type="similarity">
    <text evidence="1">Belongs to the CheB family.</text>
</comment>
<feature type="chain" id="PRO_0000264291" description="Protein-glutamate methylesterase/protein-glutamine glutaminase">
    <location>
        <begin position="1"/>
        <end position="424"/>
    </location>
</feature>
<feature type="domain" description="Response regulatory" evidence="1">
    <location>
        <begin position="6"/>
        <end position="123"/>
    </location>
</feature>
<feature type="domain" description="CheB-type methylesterase" evidence="1">
    <location>
        <begin position="229"/>
        <end position="423"/>
    </location>
</feature>
<feature type="region of interest" description="Disordered" evidence="2">
    <location>
        <begin position="177"/>
        <end position="210"/>
    </location>
</feature>
<feature type="active site" evidence="1">
    <location>
        <position position="241"/>
    </location>
</feature>
<feature type="active site" evidence="1">
    <location>
        <position position="268"/>
    </location>
</feature>
<feature type="active site" evidence="1">
    <location>
        <position position="365"/>
    </location>
</feature>
<feature type="modified residue" description="4-aspartylphosphate" evidence="1">
    <location>
        <position position="57"/>
    </location>
</feature>